<reference key="1">
    <citation type="journal article" date="2015" name="Toxins">
        <title>Partial characterization of venom from the Colombian spider Phoneutria boliviensis (aranae:ctenidae).</title>
        <authorList>
            <person name="Estrada-Gomez S."/>
            <person name="Munoz L.J."/>
            <person name="Lanchero P."/>
            <person name="Latorre C.S."/>
        </authorList>
    </citation>
    <scope>PROTEIN SEQUENCE</scope>
    <scope>SUBCELLULAR LOCATION</scope>
    <scope>IDENTIFICATION BY MASS SPECTROMETRY</scope>
    <source>
        <tissue>Venom</tissue>
    </source>
</reference>
<feature type="chain" id="PRO_0000459001" description="Omega-ctenitoxin-Pb1a" evidence="3">
    <location>
        <begin position="1" status="less than"/>
        <end position="11" status="greater than"/>
    </location>
</feature>
<feature type="disulfide bond" evidence="1">
    <location>
        <begin position="1"/>
        <end position="8"/>
    </location>
</feature>
<feature type="disulfide bond" evidence="1">
    <location>
        <begin position="10"/>
        <end status="unknown"/>
    </location>
</feature>
<feature type="unsure residue" description="L or I" evidence="6">
    <location>
        <position position="3"/>
    </location>
</feature>
<feature type="unsure residue" description="I or L" evidence="6">
    <location>
        <position position="9"/>
    </location>
</feature>
<feature type="non-terminal residue" evidence="6">
    <location>
        <position position="1"/>
    </location>
</feature>
<feature type="non-terminal residue" evidence="6">
    <location>
        <position position="11"/>
    </location>
</feature>
<name>TX20A_PHOBO</name>
<comment type="function">
    <text evidence="2">Inhibits high-voltage activated calcium channels. Shifts the voltage-dependence for activation towards hyperpolarized membrane potentials for L- (Cav1), P/Q- (Cav2.1/CACNA1A) and R-type (Cav2.3/CACNA1E) calcium currents. In vivo, causes immediate agitation and clockwise gyration, followed by the gradual development of general flaccid paralysis when injected intracerebroventricular into mice at dose levels of 5 ug per mouse.</text>
</comment>
<comment type="subcellular location">
    <subcellularLocation>
        <location evidence="3">Secreted</location>
    </subcellularLocation>
</comment>
<comment type="tissue specificity">
    <text evidence="6">Expressed by the venom gland.</text>
</comment>
<comment type="domain">
    <text evidence="5">The presence of a 'disulfide through disulfide knot' structurally defines this protein as a knottin.</text>
</comment>
<comment type="similarity">
    <text evidence="5">Belongs to the neurotoxin 02 (plectoxin) family.</text>
</comment>
<proteinExistence type="evidence at protein level"/>
<dbReference type="GO" id="GO:0005576">
    <property type="term" value="C:extracellular region"/>
    <property type="evidence" value="ECO:0007669"/>
    <property type="project" value="UniProtKB-SubCell"/>
</dbReference>
<dbReference type="GO" id="GO:0005246">
    <property type="term" value="F:calcium channel regulator activity"/>
    <property type="evidence" value="ECO:0007669"/>
    <property type="project" value="UniProtKB-KW"/>
</dbReference>
<dbReference type="GO" id="GO:0090729">
    <property type="term" value="F:toxin activity"/>
    <property type="evidence" value="ECO:0007669"/>
    <property type="project" value="UniProtKB-KW"/>
</dbReference>
<keyword id="KW-0027">Amidation</keyword>
<keyword id="KW-0108">Calcium channel impairing toxin</keyword>
<keyword id="KW-0903">Direct protein sequencing</keyword>
<keyword id="KW-1015">Disulfide bond</keyword>
<keyword id="KW-0872">Ion channel impairing toxin</keyword>
<keyword id="KW-0960">Knottin</keyword>
<keyword id="KW-0528">Neurotoxin</keyword>
<keyword id="KW-0964">Secreted</keyword>
<keyword id="KW-0800">Toxin</keyword>
<keyword id="KW-1218">Voltage-gated calcium channel impairing toxin</keyword>
<organism>
    <name type="scientific">Phoneutria boliviensis</name>
    <name type="common">Brazilian wandering spider</name>
    <dbReference type="NCBI Taxonomy" id="2598454"/>
    <lineage>
        <taxon>Eukaryota</taxon>
        <taxon>Metazoa</taxon>
        <taxon>Ecdysozoa</taxon>
        <taxon>Arthropoda</taxon>
        <taxon>Chelicerata</taxon>
        <taxon>Arachnida</taxon>
        <taxon>Araneae</taxon>
        <taxon>Araneomorphae</taxon>
        <taxon>Entelegynae</taxon>
        <taxon>Lycosoidea</taxon>
        <taxon>Ctenidae</taxon>
        <taxon>Phoneutria</taxon>
    </lineage>
</organism>
<evidence type="ECO:0000250" key="1">
    <source>
        <dbReference type="UniProtKB" id="P30288"/>
    </source>
</evidence>
<evidence type="ECO:0000250" key="2">
    <source>
        <dbReference type="UniProtKB" id="P83911"/>
    </source>
</evidence>
<evidence type="ECO:0000269" key="3">
    <source>
    </source>
</evidence>
<evidence type="ECO:0000303" key="4">
    <source>
    </source>
</evidence>
<evidence type="ECO:0000305" key="5"/>
<evidence type="ECO:0000305" key="6">
    <source>
    </source>
</evidence>
<sequence length="11" mass="1170">CDLAMGNCICK</sequence>
<accession>P0DX50</accession>
<protein>
    <recommendedName>
        <fullName evidence="5">Omega-ctenitoxin-Pb1a</fullName>
        <shortName evidence="5">Omega-CNTX-Pb1a</shortName>
    </recommendedName>
    <alternativeName>
        <fullName evidence="4">Omega-ctenitoxin-Pb48</fullName>
    </alternativeName>
</protein>